<feature type="chain" id="PRO_0000283335" description="Putative F-box protein At1g55070">
    <location>
        <begin position="1"/>
        <end position="393"/>
    </location>
</feature>
<feature type="domain" description="F-box" evidence="1">
    <location>
        <begin position="29"/>
        <end position="74"/>
    </location>
</feature>
<organism>
    <name type="scientific">Arabidopsis thaliana</name>
    <name type="common">Mouse-ear cress</name>
    <dbReference type="NCBI Taxonomy" id="3702"/>
    <lineage>
        <taxon>Eukaryota</taxon>
        <taxon>Viridiplantae</taxon>
        <taxon>Streptophyta</taxon>
        <taxon>Embryophyta</taxon>
        <taxon>Tracheophyta</taxon>
        <taxon>Spermatophyta</taxon>
        <taxon>Magnoliopsida</taxon>
        <taxon>eudicotyledons</taxon>
        <taxon>Gunneridae</taxon>
        <taxon>Pentapetalae</taxon>
        <taxon>rosids</taxon>
        <taxon>malvids</taxon>
        <taxon>Brassicales</taxon>
        <taxon>Brassicaceae</taxon>
        <taxon>Camelineae</taxon>
        <taxon>Arabidopsis</taxon>
    </lineage>
</organism>
<evidence type="ECO:0000255" key="1">
    <source>
        <dbReference type="PROSITE-ProRule" id="PRU00080"/>
    </source>
</evidence>
<protein>
    <recommendedName>
        <fullName>Putative F-box protein At1g55070</fullName>
    </recommendedName>
</protein>
<accession>Q9C725</accession>
<proteinExistence type="predicted"/>
<dbReference type="EMBL" id="AC073944">
    <property type="protein sequence ID" value="AAG50843.1"/>
    <property type="molecule type" value="Genomic_DNA"/>
</dbReference>
<dbReference type="EMBL" id="CP002684">
    <property type="protein sequence ID" value="AEE33182.1"/>
    <property type="molecule type" value="Genomic_DNA"/>
</dbReference>
<dbReference type="PIR" id="C96592">
    <property type="entry name" value="C96592"/>
</dbReference>
<dbReference type="RefSeq" id="NP_175904.1">
    <property type="nucleotide sequence ID" value="NM_104381.1"/>
</dbReference>
<dbReference type="SMR" id="Q9C725"/>
<dbReference type="FunCoup" id="Q9C725">
    <property type="interactions" value="2"/>
</dbReference>
<dbReference type="PaxDb" id="3702-AT1G55070.1"/>
<dbReference type="EnsemblPlants" id="AT1G55070.1">
    <property type="protein sequence ID" value="AT1G55070.1"/>
    <property type="gene ID" value="AT1G55070"/>
</dbReference>
<dbReference type="GeneID" id="841950"/>
<dbReference type="Gramene" id="AT1G55070.1">
    <property type="protein sequence ID" value="AT1G55070.1"/>
    <property type="gene ID" value="AT1G55070"/>
</dbReference>
<dbReference type="KEGG" id="ath:AT1G55070"/>
<dbReference type="Araport" id="AT1G55070"/>
<dbReference type="TAIR" id="AT1G55070"/>
<dbReference type="eggNOG" id="ENOG502SNHU">
    <property type="taxonomic scope" value="Eukaryota"/>
</dbReference>
<dbReference type="HOGENOM" id="CLU_027176_8_1_1"/>
<dbReference type="InParanoid" id="Q9C725"/>
<dbReference type="OMA" id="HATINYF"/>
<dbReference type="PhylomeDB" id="Q9C725"/>
<dbReference type="PRO" id="PR:Q9C725"/>
<dbReference type="Proteomes" id="UP000006548">
    <property type="component" value="Chromosome 1"/>
</dbReference>
<dbReference type="ExpressionAtlas" id="Q9C725">
    <property type="expression patterns" value="baseline and differential"/>
</dbReference>
<dbReference type="Gene3D" id="1.20.1280.50">
    <property type="match status" value="1"/>
</dbReference>
<dbReference type="InterPro" id="IPR013187">
    <property type="entry name" value="F-box-assoc_dom_typ3"/>
</dbReference>
<dbReference type="InterPro" id="IPR017451">
    <property type="entry name" value="F-box-assoc_interact_dom"/>
</dbReference>
<dbReference type="InterPro" id="IPR036047">
    <property type="entry name" value="F-box-like_dom_sf"/>
</dbReference>
<dbReference type="InterPro" id="IPR001810">
    <property type="entry name" value="F-box_dom"/>
</dbReference>
<dbReference type="NCBIfam" id="TIGR01640">
    <property type="entry name" value="F_box_assoc_1"/>
    <property type="match status" value="1"/>
</dbReference>
<dbReference type="PANTHER" id="PTHR31111">
    <property type="entry name" value="BNAA05G37150D PROTEIN-RELATED"/>
    <property type="match status" value="1"/>
</dbReference>
<dbReference type="PANTHER" id="PTHR31111:SF94">
    <property type="entry name" value="E3 UBIQUITIN-PROTEIN LIGASE SGIP1"/>
    <property type="match status" value="1"/>
</dbReference>
<dbReference type="Pfam" id="PF00646">
    <property type="entry name" value="F-box"/>
    <property type="match status" value="1"/>
</dbReference>
<dbReference type="Pfam" id="PF08268">
    <property type="entry name" value="FBA_3"/>
    <property type="match status" value="1"/>
</dbReference>
<dbReference type="SMART" id="SM00256">
    <property type="entry name" value="FBOX"/>
    <property type="match status" value="1"/>
</dbReference>
<dbReference type="SUPFAM" id="SSF81383">
    <property type="entry name" value="F-box domain"/>
    <property type="match status" value="1"/>
</dbReference>
<dbReference type="PROSITE" id="PS50181">
    <property type="entry name" value="FBOX"/>
    <property type="match status" value="1"/>
</dbReference>
<sequence length="393" mass="45541">MTKRKQQDTKENLTLTVFESNKRCSNSGGEYFDRIPADLVIKILSKLSAKSMAKCRCVCKLLSSIIRQPNYNQLFPIKYPDPPRFIFTFLGGGMLFSYTSTQPENPDENSSLVATAHHHTDIPRDFSQILSSVHGLVCYHRKIKNDTVFVIYNPITGQYVTLPILEAHATINYFAIGYDPINKRFKVLCVTSVHHGTGEEFDSQHQVLTFETGRRNLFWRKIQCRRHYYTHRYHKGICIKGVLYYAATSMKPMLGPMIVCFDVRSEKFGFITWKPPSLINYKGKLGSINSNDNDLVLWVLEHGQERKWSKHIYVKPLQWPEFNGIDVNFLVTSKGEAVFCPNHYDPQVPFYLYYYNLEENIVVRVRVEVPESQGSKRVLFHAVPNYLENMKLT</sequence>
<keyword id="KW-1185">Reference proteome</keyword>
<name>FB61_ARATH</name>
<gene>
    <name type="ordered locus">At1g55070</name>
    <name type="ORF">T7N22.2</name>
</gene>
<reference key="1">
    <citation type="journal article" date="2000" name="Nature">
        <title>Sequence and analysis of chromosome 1 of the plant Arabidopsis thaliana.</title>
        <authorList>
            <person name="Theologis A."/>
            <person name="Ecker J.R."/>
            <person name="Palm C.J."/>
            <person name="Federspiel N.A."/>
            <person name="Kaul S."/>
            <person name="White O."/>
            <person name="Alonso J."/>
            <person name="Altafi H."/>
            <person name="Araujo R."/>
            <person name="Bowman C.L."/>
            <person name="Brooks S.Y."/>
            <person name="Buehler E."/>
            <person name="Chan A."/>
            <person name="Chao Q."/>
            <person name="Chen H."/>
            <person name="Cheuk R.F."/>
            <person name="Chin C.W."/>
            <person name="Chung M.K."/>
            <person name="Conn L."/>
            <person name="Conway A.B."/>
            <person name="Conway A.R."/>
            <person name="Creasy T.H."/>
            <person name="Dewar K."/>
            <person name="Dunn P."/>
            <person name="Etgu P."/>
            <person name="Feldblyum T.V."/>
            <person name="Feng J.-D."/>
            <person name="Fong B."/>
            <person name="Fujii C.Y."/>
            <person name="Gill J.E."/>
            <person name="Goldsmith A.D."/>
            <person name="Haas B."/>
            <person name="Hansen N.F."/>
            <person name="Hughes B."/>
            <person name="Huizar L."/>
            <person name="Hunter J.L."/>
            <person name="Jenkins J."/>
            <person name="Johnson-Hopson C."/>
            <person name="Khan S."/>
            <person name="Khaykin E."/>
            <person name="Kim C.J."/>
            <person name="Koo H.L."/>
            <person name="Kremenetskaia I."/>
            <person name="Kurtz D.B."/>
            <person name="Kwan A."/>
            <person name="Lam B."/>
            <person name="Langin-Hooper S."/>
            <person name="Lee A."/>
            <person name="Lee J.M."/>
            <person name="Lenz C.A."/>
            <person name="Li J.H."/>
            <person name="Li Y.-P."/>
            <person name="Lin X."/>
            <person name="Liu S.X."/>
            <person name="Liu Z.A."/>
            <person name="Luros J.S."/>
            <person name="Maiti R."/>
            <person name="Marziali A."/>
            <person name="Militscher J."/>
            <person name="Miranda M."/>
            <person name="Nguyen M."/>
            <person name="Nierman W.C."/>
            <person name="Osborne B.I."/>
            <person name="Pai G."/>
            <person name="Peterson J."/>
            <person name="Pham P.K."/>
            <person name="Rizzo M."/>
            <person name="Rooney T."/>
            <person name="Rowley D."/>
            <person name="Sakano H."/>
            <person name="Salzberg S.L."/>
            <person name="Schwartz J.R."/>
            <person name="Shinn P."/>
            <person name="Southwick A.M."/>
            <person name="Sun H."/>
            <person name="Tallon L.J."/>
            <person name="Tambunga G."/>
            <person name="Toriumi M.J."/>
            <person name="Town C.D."/>
            <person name="Utterback T."/>
            <person name="Van Aken S."/>
            <person name="Vaysberg M."/>
            <person name="Vysotskaia V.S."/>
            <person name="Walker M."/>
            <person name="Wu D."/>
            <person name="Yu G."/>
            <person name="Fraser C.M."/>
            <person name="Venter J.C."/>
            <person name="Davis R.W."/>
        </authorList>
    </citation>
    <scope>NUCLEOTIDE SEQUENCE [LARGE SCALE GENOMIC DNA]</scope>
    <source>
        <strain>cv. Columbia</strain>
    </source>
</reference>
<reference key="2">
    <citation type="journal article" date="2017" name="Plant J.">
        <title>Araport11: a complete reannotation of the Arabidopsis thaliana reference genome.</title>
        <authorList>
            <person name="Cheng C.Y."/>
            <person name="Krishnakumar V."/>
            <person name="Chan A.P."/>
            <person name="Thibaud-Nissen F."/>
            <person name="Schobel S."/>
            <person name="Town C.D."/>
        </authorList>
    </citation>
    <scope>GENOME REANNOTATION</scope>
    <source>
        <strain>cv. Columbia</strain>
    </source>
</reference>